<proteinExistence type="evidence at protein level"/>
<evidence type="ECO:0000255" key="1">
    <source>
        <dbReference type="HAMAP-Rule" id="MF_00099"/>
    </source>
</evidence>
<evidence type="ECO:0007829" key="2">
    <source>
        <dbReference type="PDB" id="3SFT"/>
    </source>
</evidence>
<evidence type="ECO:0007829" key="3">
    <source>
        <dbReference type="PDB" id="3T8Y"/>
    </source>
</evidence>
<name>CHEB_THEMA</name>
<reference key="1">
    <citation type="journal article" date="1999" name="Nature">
        <title>Evidence for lateral gene transfer between Archaea and Bacteria from genome sequence of Thermotoga maritima.</title>
        <authorList>
            <person name="Nelson K.E."/>
            <person name="Clayton R.A."/>
            <person name="Gill S.R."/>
            <person name="Gwinn M.L."/>
            <person name="Dodson R.J."/>
            <person name="Haft D.H."/>
            <person name="Hickey E.K."/>
            <person name="Peterson J.D."/>
            <person name="Nelson W.C."/>
            <person name="Ketchum K.A."/>
            <person name="McDonald L.A."/>
            <person name="Utterback T.R."/>
            <person name="Malek J.A."/>
            <person name="Linher K.D."/>
            <person name="Garrett M.M."/>
            <person name="Stewart A.M."/>
            <person name="Cotton M.D."/>
            <person name="Pratt M.S."/>
            <person name="Phillips C.A."/>
            <person name="Richardson D.L."/>
            <person name="Heidelberg J.F."/>
            <person name="Sutton G.G."/>
            <person name="Fleischmann R.D."/>
            <person name="Eisen J.A."/>
            <person name="White O."/>
            <person name="Salzberg S.L."/>
            <person name="Smith H.O."/>
            <person name="Venter J.C."/>
            <person name="Fraser C.M."/>
        </authorList>
    </citation>
    <scope>NUCLEOTIDE SEQUENCE [LARGE SCALE GENOMIC DNA]</scope>
    <source>
        <strain>ATCC 43589 / DSM 3109 / JCM 10099 / NBRC 100826 / MSB8</strain>
    </source>
</reference>
<sequence length="344" mass="37623">MTDRVIRVLVVDDSAFMRMVLKDIIDSQPDMKVVGFAKDGLEAVEKAIELKPDVITMDIEMPNLNGIEALKLIMKKAPTRVIMVSSLTEEGAAITIEALRNGAVDFITKPHGSISLTFRQVAPELLEKIRQAMNVDPRTLLFKPKVSRLTITKPAVSGKIVVIGSSTGGPRSLDMIIPNLPKNFPAPIVVVQHMPPGFTKSLAMRLDSTSELTVKEAEDGEEVKPGFVYIAPGDFHLGLKAQNGKVFFFLDKSDKINNVRPAVDFTLDKAAEIYKSKTIAVILTGMGKDGTKGAFKVKFYGGTVIAEDKETCVVFGMPKSVIEEGYADYVLPAYKIPEKLIELV</sequence>
<keyword id="KW-0002">3D-structure</keyword>
<keyword id="KW-0145">Chemotaxis</keyword>
<keyword id="KW-0963">Cytoplasm</keyword>
<keyword id="KW-0378">Hydrolase</keyword>
<keyword id="KW-0597">Phosphoprotein</keyword>
<keyword id="KW-1185">Reference proteome</keyword>
<protein>
    <recommendedName>
        <fullName evidence="1">Protein-glutamate methylesterase/protein-glutamine glutaminase</fullName>
        <ecNumber evidence="1">3.1.1.61</ecNumber>
        <ecNumber evidence="1">3.5.1.44</ecNumber>
    </recommendedName>
</protein>
<feature type="chain" id="PRO_0000158032" description="Protein-glutamate methylesterase/protein-glutamine glutaminase">
    <location>
        <begin position="1"/>
        <end position="344"/>
    </location>
</feature>
<feature type="domain" description="Response regulatory" evidence="1">
    <location>
        <begin position="7"/>
        <end position="124"/>
    </location>
</feature>
<feature type="domain" description="CheB-type methylesterase" evidence="1">
    <location>
        <begin position="154"/>
        <end position="344"/>
    </location>
</feature>
<feature type="active site" evidence="1">
    <location>
        <position position="166"/>
    </location>
</feature>
<feature type="active site" evidence="1">
    <location>
        <position position="193"/>
    </location>
</feature>
<feature type="active site" evidence="1">
    <location>
        <position position="289"/>
    </location>
</feature>
<feature type="modified residue" description="4-aspartylphosphate" evidence="1">
    <location>
        <position position="58"/>
    </location>
</feature>
<feature type="strand" evidence="3">
    <location>
        <begin position="6"/>
        <end position="11"/>
    </location>
</feature>
<feature type="helix" evidence="3">
    <location>
        <begin position="15"/>
        <end position="26"/>
    </location>
</feature>
<feature type="strand" evidence="3">
    <location>
        <begin position="31"/>
        <end position="39"/>
    </location>
</feature>
<feature type="helix" evidence="3">
    <location>
        <begin position="40"/>
        <end position="50"/>
    </location>
</feature>
<feature type="strand" evidence="3">
    <location>
        <begin position="53"/>
        <end position="57"/>
    </location>
</feature>
<feature type="strand" evidence="3">
    <location>
        <begin position="62"/>
        <end position="64"/>
    </location>
</feature>
<feature type="helix" evidence="3">
    <location>
        <begin position="66"/>
        <end position="76"/>
    </location>
</feature>
<feature type="strand" evidence="3">
    <location>
        <begin position="80"/>
        <end position="87"/>
    </location>
</feature>
<feature type="helix" evidence="3">
    <location>
        <begin position="93"/>
        <end position="100"/>
    </location>
</feature>
<feature type="strand" evidence="3">
    <location>
        <begin position="105"/>
        <end position="108"/>
    </location>
</feature>
<feature type="strand" evidence="3">
    <location>
        <begin position="110"/>
        <end position="114"/>
    </location>
</feature>
<feature type="helix" evidence="3">
    <location>
        <begin position="116"/>
        <end position="121"/>
    </location>
</feature>
<feature type="helix" evidence="3">
    <location>
        <begin position="122"/>
        <end position="132"/>
    </location>
</feature>
<feature type="strand" evidence="2">
    <location>
        <begin position="160"/>
        <end position="165"/>
    </location>
</feature>
<feature type="helix" evidence="2">
    <location>
        <begin position="169"/>
        <end position="173"/>
    </location>
</feature>
<feature type="turn" evidence="2">
    <location>
        <begin position="174"/>
        <end position="176"/>
    </location>
</feature>
<feature type="helix" evidence="2">
    <location>
        <begin position="177"/>
        <end position="179"/>
    </location>
</feature>
<feature type="strand" evidence="2">
    <location>
        <begin position="188"/>
        <end position="192"/>
    </location>
</feature>
<feature type="helix" evidence="2">
    <location>
        <begin position="199"/>
        <end position="209"/>
    </location>
</feature>
<feature type="strand" evidence="2">
    <location>
        <begin position="211"/>
        <end position="216"/>
    </location>
</feature>
<feature type="strand" evidence="2">
    <location>
        <begin position="227"/>
        <end position="230"/>
    </location>
</feature>
<feature type="strand" evidence="2">
    <location>
        <begin position="235"/>
        <end position="242"/>
    </location>
</feature>
<feature type="strand" evidence="2">
    <location>
        <begin position="245"/>
        <end position="251"/>
    </location>
</feature>
<feature type="strand" evidence="2">
    <location>
        <begin position="256"/>
        <end position="258"/>
    </location>
</feature>
<feature type="helix" evidence="2">
    <location>
        <begin position="263"/>
        <end position="274"/>
    </location>
</feature>
<feature type="helix" evidence="2">
    <location>
        <begin position="275"/>
        <end position="277"/>
    </location>
</feature>
<feature type="strand" evidence="2">
    <location>
        <begin position="278"/>
        <end position="282"/>
    </location>
</feature>
<feature type="strand" evidence="2">
    <location>
        <begin position="284"/>
        <end position="287"/>
    </location>
</feature>
<feature type="helix" evidence="2">
    <location>
        <begin position="291"/>
        <end position="299"/>
    </location>
</feature>
<feature type="strand" evidence="2">
    <location>
        <begin position="303"/>
        <end position="307"/>
    </location>
</feature>
<feature type="helix" evidence="2">
    <location>
        <begin position="309"/>
        <end position="311"/>
    </location>
</feature>
<feature type="strand" evidence="2">
    <location>
        <begin position="313"/>
        <end position="316"/>
    </location>
</feature>
<feature type="helix" evidence="2">
    <location>
        <begin position="317"/>
        <end position="323"/>
    </location>
</feature>
<feature type="strand" evidence="2">
    <location>
        <begin position="328"/>
        <end position="331"/>
    </location>
</feature>
<feature type="helix" evidence="2">
    <location>
        <begin position="333"/>
        <end position="335"/>
    </location>
</feature>
<feature type="helix" evidence="2">
    <location>
        <begin position="336"/>
        <end position="343"/>
    </location>
</feature>
<accession>Q9WYN9</accession>
<gene>
    <name evidence="1" type="primary">cheB</name>
    <name type="ordered locus">TM_0408</name>
</gene>
<comment type="function">
    <text evidence="1">Involved in chemotaxis. Part of a chemotaxis signal transduction system that modulates chemotaxis in response to various stimuli. Catalyzes the demethylation of specific methylglutamate residues introduced into the chemoreceptors (methyl-accepting chemotaxis proteins or MCP) by CheR. Also mediates the irreversible deamidation of specific glutamine residues to glutamic acid.</text>
</comment>
<comment type="catalytic activity">
    <reaction evidence="1">
        <text>[protein]-L-glutamate 5-O-methyl ester + H2O = L-glutamyl-[protein] + methanol + H(+)</text>
        <dbReference type="Rhea" id="RHEA:23236"/>
        <dbReference type="Rhea" id="RHEA-COMP:10208"/>
        <dbReference type="Rhea" id="RHEA-COMP:10311"/>
        <dbReference type="ChEBI" id="CHEBI:15377"/>
        <dbReference type="ChEBI" id="CHEBI:15378"/>
        <dbReference type="ChEBI" id="CHEBI:17790"/>
        <dbReference type="ChEBI" id="CHEBI:29973"/>
        <dbReference type="ChEBI" id="CHEBI:82795"/>
        <dbReference type="EC" id="3.1.1.61"/>
    </reaction>
</comment>
<comment type="catalytic activity">
    <reaction evidence="1">
        <text>L-glutaminyl-[protein] + H2O = L-glutamyl-[protein] + NH4(+)</text>
        <dbReference type="Rhea" id="RHEA:16441"/>
        <dbReference type="Rhea" id="RHEA-COMP:10207"/>
        <dbReference type="Rhea" id="RHEA-COMP:10208"/>
        <dbReference type="ChEBI" id="CHEBI:15377"/>
        <dbReference type="ChEBI" id="CHEBI:28938"/>
        <dbReference type="ChEBI" id="CHEBI:29973"/>
        <dbReference type="ChEBI" id="CHEBI:30011"/>
        <dbReference type="EC" id="3.5.1.44"/>
    </reaction>
</comment>
<comment type="subcellular location">
    <subcellularLocation>
        <location evidence="1">Cytoplasm</location>
    </subcellularLocation>
</comment>
<comment type="domain">
    <text evidence="1">Contains a C-terminal catalytic domain, and an N-terminal region which modulates catalytic activity.</text>
</comment>
<comment type="PTM">
    <text evidence="1">Phosphorylated by CheA. Phosphorylation of the N-terminal regulatory domain activates the methylesterase activity.</text>
</comment>
<comment type="similarity">
    <text evidence="1">Belongs to the CheB family.</text>
</comment>
<dbReference type="EC" id="3.1.1.61" evidence="1"/>
<dbReference type="EC" id="3.5.1.44" evidence="1"/>
<dbReference type="EMBL" id="AE000512">
    <property type="protein sequence ID" value="AAD35493.1"/>
    <property type="molecule type" value="Genomic_DNA"/>
</dbReference>
<dbReference type="PIR" id="F72380">
    <property type="entry name" value="F72380"/>
</dbReference>
<dbReference type="RefSeq" id="NP_228218.1">
    <property type="nucleotide sequence ID" value="NC_000853.1"/>
</dbReference>
<dbReference type="RefSeq" id="WP_004083251.1">
    <property type="nucleotide sequence ID" value="NC_000853.1"/>
</dbReference>
<dbReference type="PDB" id="3SFT">
    <property type="method" value="X-ray"/>
    <property type="resolution" value="2.15 A"/>
    <property type="chains" value="A=156-344"/>
</dbReference>
<dbReference type="PDB" id="3T8Y">
    <property type="method" value="X-ray"/>
    <property type="resolution" value="1.90 A"/>
    <property type="chains" value="A/B=1-144"/>
</dbReference>
<dbReference type="PDBsum" id="3SFT"/>
<dbReference type="PDBsum" id="3T8Y"/>
<dbReference type="SMR" id="Q9WYN9"/>
<dbReference type="FunCoup" id="Q9WYN9">
    <property type="interactions" value="133"/>
</dbReference>
<dbReference type="STRING" id="243274.TM_0408"/>
<dbReference type="PaxDb" id="243274-THEMA_02685"/>
<dbReference type="EnsemblBacteria" id="AAD35493">
    <property type="protein sequence ID" value="AAD35493"/>
    <property type="gene ID" value="TM_0408"/>
</dbReference>
<dbReference type="KEGG" id="tma:TM0408"/>
<dbReference type="KEGG" id="tmi:THEMA_02685"/>
<dbReference type="KEGG" id="tmm:Tmari_0405"/>
<dbReference type="KEGG" id="tmw:THMA_0414"/>
<dbReference type="eggNOG" id="COG2201">
    <property type="taxonomic scope" value="Bacteria"/>
</dbReference>
<dbReference type="InParanoid" id="Q9WYN9"/>
<dbReference type="OrthoDB" id="9793421at2"/>
<dbReference type="EvolutionaryTrace" id="Q9WYN9"/>
<dbReference type="Proteomes" id="UP000008183">
    <property type="component" value="Chromosome"/>
</dbReference>
<dbReference type="GO" id="GO:0005737">
    <property type="term" value="C:cytoplasm"/>
    <property type="evidence" value="ECO:0007669"/>
    <property type="project" value="UniProtKB-SubCell"/>
</dbReference>
<dbReference type="GO" id="GO:0000156">
    <property type="term" value="F:phosphorelay response regulator activity"/>
    <property type="evidence" value="ECO:0007669"/>
    <property type="project" value="InterPro"/>
</dbReference>
<dbReference type="GO" id="GO:0008984">
    <property type="term" value="F:protein-glutamate methylesterase activity"/>
    <property type="evidence" value="ECO:0007669"/>
    <property type="project" value="UniProtKB-UniRule"/>
</dbReference>
<dbReference type="GO" id="GO:0050568">
    <property type="term" value="F:protein-glutamine glutaminase activity"/>
    <property type="evidence" value="ECO:0007669"/>
    <property type="project" value="UniProtKB-UniRule"/>
</dbReference>
<dbReference type="GO" id="GO:0006935">
    <property type="term" value="P:chemotaxis"/>
    <property type="evidence" value="ECO:0007669"/>
    <property type="project" value="UniProtKB-UniRule"/>
</dbReference>
<dbReference type="CDD" id="cd16351">
    <property type="entry name" value="CheB_like"/>
    <property type="match status" value="1"/>
</dbReference>
<dbReference type="CDD" id="cd17541">
    <property type="entry name" value="REC_CheB-like"/>
    <property type="match status" value="1"/>
</dbReference>
<dbReference type="Gene3D" id="3.40.50.2300">
    <property type="match status" value="1"/>
</dbReference>
<dbReference type="Gene3D" id="3.40.50.180">
    <property type="entry name" value="Methylesterase CheB, C-terminal domain"/>
    <property type="match status" value="1"/>
</dbReference>
<dbReference type="HAMAP" id="MF_00099">
    <property type="entry name" value="CheB_chemtxs"/>
    <property type="match status" value="1"/>
</dbReference>
<dbReference type="InterPro" id="IPR008248">
    <property type="entry name" value="CheB-like"/>
</dbReference>
<dbReference type="InterPro" id="IPR035909">
    <property type="entry name" value="CheB_C"/>
</dbReference>
<dbReference type="InterPro" id="IPR011006">
    <property type="entry name" value="CheY-like_superfamily"/>
</dbReference>
<dbReference type="InterPro" id="IPR000673">
    <property type="entry name" value="Sig_transdc_resp-reg_Me-estase"/>
</dbReference>
<dbReference type="InterPro" id="IPR001789">
    <property type="entry name" value="Sig_transdc_resp-reg_receiver"/>
</dbReference>
<dbReference type="NCBIfam" id="NF001965">
    <property type="entry name" value="PRK00742.1"/>
    <property type="match status" value="1"/>
</dbReference>
<dbReference type="PANTHER" id="PTHR42872">
    <property type="entry name" value="PROTEIN-GLUTAMATE METHYLESTERASE/PROTEIN-GLUTAMINE GLUTAMINASE"/>
    <property type="match status" value="1"/>
</dbReference>
<dbReference type="PANTHER" id="PTHR42872:SF3">
    <property type="entry name" value="PROTEIN-GLUTAMATE METHYLESTERASE_PROTEIN-GLUTAMINE GLUTAMINASE 1"/>
    <property type="match status" value="1"/>
</dbReference>
<dbReference type="Pfam" id="PF01339">
    <property type="entry name" value="CheB_methylest"/>
    <property type="match status" value="1"/>
</dbReference>
<dbReference type="Pfam" id="PF00072">
    <property type="entry name" value="Response_reg"/>
    <property type="match status" value="1"/>
</dbReference>
<dbReference type="PIRSF" id="PIRSF000876">
    <property type="entry name" value="RR_chemtxs_CheB"/>
    <property type="match status" value="1"/>
</dbReference>
<dbReference type="SMART" id="SM00448">
    <property type="entry name" value="REC"/>
    <property type="match status" value="1"/>
</dbReference>
<dbReference type="SUPFAM" id="SSF52172">
    <property type="entry name" value="CheY-like"/>
    <property type="match status" value="1"/>
</dbReference>
<dbReference type="SUPFAM" id="SSF52738">
    <property type="entry name" value="Methylesterase CheB, C-terminal domain"/>
    <property type="match status" value="1"/>
</dbReference>
<dbReference type="PROSITE" id="PS50122">
    <property type="entry name" value="CHEB"/>
    <property type="match status" value="1"/>
</dbReference>
<dbReference type="PROSITE" id="PS50110">
    <property type="entry name" value="RESPONSE_REGULATORY"/>
    <property type="match status" value="1"/>
</dbReference>
<organism>
    <name type="scientific">Thermotoga maritima (strain ATCC 43589 / DSM 3109 / JCM 10099 / NBRC 100826 / MSB8)</name>
    <dbReference type="NCBI Taxonomy" id="243274"/>
    <lineage>
        <taxon>Bacteria</taxon>
        <taxon>Thermotogati</taxon>
        <taxon>Thermotogota</taxon>
        <taxon>Thermotogae</taxon>
        <taxon>Thermotogales</taxon>
        <taxon>Thermotogaceae</taxon>
        <taxon>Thermotoga</taxon>
    </lineage>
</organism>